<reference key="1">
    <citation type="journal article" date="2002" name="J. Mol. Microbiol. Biotechnol.">
        <title>The genome of Methanosarcina mazei: evidence for lateral gene transfer between Bacteria and Archaea.</title>
        <authorList>
            <person name="Deppenmeier U."/>
            <person name="Johann A."/>
            <person name="Hartsch T."/>
            <person name="Merkl R."/>
            <person name="Schmitz R.A."/>
            <person name="Martinez-Arias R."/>
            <person name="Henne A."/>
            <person name="Wiezer A."/>
            <person name="Baeumer S."/>
            <person name="Jacobi C."/>
            <person name="Brueggemann H."/>
            <person name="Lienard T."/>
            <person name="Christmann A."/>
            <person name="Boemecke M."/>
            <person name="Steckel S."/>
            <person name="Bhattacharyya A."/>
            <person name="Lykidis A."/>
            <person name="Overbeek R."/>
            <person name="Klenk H.-P."/>
            <person name="Gunsalus R.P."/>
            <person name="Fritz H.-J."/>
            <person name="Gottschalk G."/>
        </authorList>
    </citation>
    <scope>NUCLEOTIDE SEQUENCE [LARGE SCALE GENOMIC DNA]</scope>
    <source>
        <strain>ATCC BAA-159 / DSM 3647 / Goe1 / Go1 / JCM 11833 / OCM 88</strain>
    </source>
</reference>
<name>RL10E_METMA</name>
<protein>
    <recommendedName>
        <fullName evidence="1">Large ribosomal subunit protein uL16</fullName>
    </recommendedName>
    <alternativeName>
        <fullName evidence="2">50S ribosomal protein L10e</fullName>
    </alternativeName>
</protein>
<comment type="similarity">
    <text evidence="1">Belongs to the universal ribosomal protein uL16 family.</text>
</comment>
<evidence type="ECO:0000255" key="1">
    <source>
        <dbReference type="HAMAP-Rule" id="MF_00448"/>
    </source>
</evidence>
<evidence type="ECO:0000305" key="2"/>
<keyword id="KW-0687">Ribonucleoprotein</keyword>
<keyword id="KW-0689">Ribosomal protein</keyword>
<feature type="chain" id="PRO_0000147137" description="Large ribosomal subunit protein uL16">
    <location>
        <begin position="1"/>
        <end position="173"/>
    </location>
</feature>
<accession>Q8PWV0</accession>
<gene>
    <name evidence="1" type="primary">rpl10e</name>
    <name type="ordered locus">MM_1476</name>
</gene>
<proteinExistence type="inferred from homology"/>
<organism>
    <name type="scientific">Methanosarcina mazei (strain ATCC BAA-159 / DSM 3647 / Goe1 / Go1 / JCM 11833 / OCM 88)</name>
    <name type="common">Methanosarcina frisia</name>
    <dbReference type="NCBI Taxonomy" id="192952"/>
    <lineage>
        <taxon>Archaea</taxon>
        <taxon>Methanobacteriati</taxon>
        <taxon>Methanobacteriota</taxon>
        <taxon>Stenosarchaea group</taxon>
        <taxon>Methanomicrobia</taxon>
        <taxon>Methanosarcinales</taxon>
        <taxon>Methanosarcinaceae</taxon>
        <taxon>Methanosarcina</taxon>
    </lineage>
</organism>
<dbReference type="EMBL" id="AE008384">
    <property type="protein sequence ID" value="AAM31172.1"/>
    <property type="molecule type" value="Genomic_DNA"/>
</dbReference>
<dbReference type="RefSeq" id="WP_011033422.1">
    <property type="nucleotide sequence ID" value="NC_003901.1"/>
</dbReference>
<dbReference type="SMR" id="Q8PWV0"/>
<dbReference type="KEGG" id="mma:MM_1476"/>
<dbReference type="PATRIC" id="fig|192952.21.peg.1704"/>
<dbReference type="eggNOG" id="arCOG04113">
    <property type="taxonomic scope" value="Archaea"/>
</dbReference>
<dbReference type="HOGENOM" id="CLU_084051_0_2_2"/>
<dbReference type="Proteomes" id="UP000000595">
    <property type="component" value="Chromosome"/>
</dbReference>
<dbReference type="GO" id="GO:1990904">
    <property type="term" value="C:ribonucleoprotein complex"/>
    <property type="evidence" value="ECO:0007669"/>
    <property type="project" value="UniProtKB-KW"/>
</dbReference>
<dbReference type="GO" id="GO:0005840">
    <property type="term" value="C:ribosome"/>
    <property type="evidence" value="ECO:0007669"/>
    <property type="project" value="UniProtKB-KW"/>
</dbReference>
<dbReference type="GO" id="GO:0003735">
    <property type="term" value="F:structural constituent of ribosome"/>
    <property type="evidence" value="ECO:0007669"/>
    <property type="project" value="InterPro"/>
</dbReference>
<dbReference type="GO" id="GO:0006412">
    <property type="term" value="P:translation"/>
    <property type="evidence" value="ECO:0007669"/>
    <property type="project" value="UniProtKB-UniRule"/>
</dbReference>
<dbReference type="CDD" id="cd01433">
    <property type="entry name" value="Ribosomal_L16_L10e"/>
    <property type="match status" value="1"/>
</dbReference>
<dbReference type="FunFam" id="3.90.1170.10:FF:000008">
    <property type="entry name" value="50S ribosomal protein L10e"/>
    <property type="match status" value="1"/>
</dbReference>
<dbReference type="Gene3D" id="3.90.1170.10">
    <property type="entry name" value="Ribosomal protein L10e/L16"/>
    <property type="match status" value="1"/>
</dbReference>
<dbReference type="HAMAP" id="MF_00448">
    <property type="entry name" value="Ribosomal_uL16_arch"/>
    <property type="match status" value="1"/>
</dbReference>
<dbReference type="InterPro" id="IPR047873">
    <property type="entry name" value="Ribosomal_uL16"/>
</dbReference>
<dbReference type="InterPro" id="IPR022981">
    <property type="entry name" value="Ribosomal_uL16_arc"/>
</dbReference>
<dbReference type="InterPro" id="IPR018255">
    <property type="entry name" value="Ribosomal_uL16_CS_euk_arc"/>
</dbReference>
<dbReference type="InterPro" id="IPR016180">
    <property type="entry name" value="Ribosomal_uL16_dom"/>
</dbReference>
<dbReference type="InterPro" id="IPR001197">
    <property type="entry name" value="Ribosomal_uL16_euk_arch"/>
</dbReference>
<dbReference type="InterPro" id="IPR036920">
    <property type="entry name" value="Ribosomal_uL16_sf"/>
</dbReference>
<dbReference type="NCBIfam" id="NF003238">
    <property type="entry name" value="PRK04199.1-3"/>
    <property type="match status" value="1"/>
</dbReference>
<dbReference type="NCBIfam" id="NF003239">
    <property type="entry name" value="PRK04199.1-4"/>
    <property type="match status" value="1"/>
</dbReference>
<dbReference type="PANTHER" id="PTHR11726">
    <property type="entry name" value="60S RIBOSOMAL PROTEIN L10"/>
    <property type="match status" value="1"/>
</dbReference>
<dbReference type="Pfam" id="PF00252">
    <property type="entry name" value="Ribosomal_L16"/>
    <property type="match status" value="1"/>
</dbReference>
<dbReference type="PIRSF" id="PIRSF005590">
    <property type="entry name" value="Ribosomal_L10"/>
    <property type="match status" value="1"/>
</dbReference>
<dbReference type="SUPFAM" id="SSF54686">
    <property type="entry name" value="Ribosomal protein L16p/L10e"/>
    <property type="match status" value="1"/>
</dbReference>
<dbReference type="PROSITE" id="PS01257">
    <property type="entry name" value="RIBOSOMAL_L10E"/>
    <property type="match status" value="1"/>
</dbReference>
<sequence>MVRKPGSMYRNVRQRSFTRRKYMGGVPGSQVIHYDMGDKANTTFPVKISLVAEEKCQIRHTALEAARITANRHLVADAGKMGFYMKLRVYPHEVLRENKQATGAGADRVSSGMRRAFGKNVGTAARVNSMQKLFTVAVEKQNFPAAKKALWHAGQKLPTPVRIVIDEGAELVQ</sequence>